<dbReference type="EC" id="2.4.2.1" evidence="2"/>
<dbReference type="EMBL" id="AE016826">
    <property type="protein sequence ID" value="AAO27188.1"/>
    <property type="molecule type" value="Genomic_DNA"/>
</dbReference>
<dbReference type="RefSeq" id="WP_011091589.1">
    <property type="nucleotide sequence ID" value="NC_004545.1"/>
</dbReference>
<dbReference type="SMR" id="Q89A58"/>
<dbReference type="STRING" id="224915.bbp_483"/>
<dbReference type="KEGG" id="bab:bbp_483"/>
<dbReference type="eggNOG" id="COG0813">
    <property type="taxonomic scope" value="Bacteria"/>
</dbReference>
<dbReference type="HOGENOM" id="CLU_068457_2_0_6"/>
<dbReference type="OrthoDB" id="9782889at2"/>
<dbReference type="Proteomes" id="UP000000601">
    <property type="component" value="Chromosome"/>
</dbReference>
<dbReference type="GO" id="GO:0005829">
    <property type="term" value="C:cytosol"/>
    <property type="evidence" value="ECO:0007669"/>
    <property type="project" value="TreeGrafter"/>
</dbReference>
<dbReference type="GO" id="GO:0004731">
    <property type="term" value="F:purine-nucleoside phosphorylase activity"/>
    <property type="evidence" value="ECO:0007669"/>
    <property type="project" value="UniProtKB-UniRule"/>
</dbReference>
<dbReference type="GO" id="GO:0006152">
    <property type="term" value="P:purine nucleoside catabolic process"/>
    <property type="evidence" value="ECO:0007669"/>
    <property type="project" value="TreeGrafter"/>
</dbReference>
<dbReference type="CDD" id="cd09006">
    <property type="entry name" value="PNP_EcPNPI-like"/>
    <property type="match status" value="1"/>
</dbReference>
<dbReference type="Gene3D" id="3.40.50.1580">
    <property type="entry name" value="Nucleoside phosphorylase domain"/>
    <property type="match status" value="1"/>
</dbReference>
<dbReference type="HAMAP" id="MF_01627">
    <property type="entry name" value="Pur_nucleosid_phosp"/>
    <property type="match status" value="1"/>
</dbReference>
<dbReference type="InterPro" id="IPR004402">
    <property type="entry name" value="DeoD-type"/>
</dbReference>
<dbReference type="InterPro" id="IPR018016">
    <property type="entry name" value="Nucleoside_phosphorylase_CS"/>
</dbReference>
<dbReference type="InterPro" id="IPR000845">
    <property type="entry name" value="Nucleoside_phosphorylase_d"/>
</dbReference>
<dbReference type="InterPro" id="IPR035994">
    <property type="entry name" value="Nucleoside_phosphorylase_sf"/>
</dbReference>
<dbReference type="NCBIfam" id="TIGR00107">
    <property type="entry name" value="deoD"/>
    <property type="match status" value="1"/>
</dbReference>
<dbReference type="NCBIfam" id="NF004489">
    <property type="entry name" value="PRK05819.1"/>
    <property type="match status" value="1"/>
</dbReference>
<dbReference type="PANTHER" id="PTHR43691:SF11">
    <property type="entry name" value="FI09636P-RELATED"/>
    <property type="match status" value="1"/>
</dbReference>
<dbReference type="PANTHER" id="PTHR43691">
    <property type="entry name" value="URIDINE PHOSPHORYLASE"/>
    <property type="match status" value="1"/>
</dbReference>
<dbReference type="Pfam" id="PF01048">
    <property type="entry name" value="PNP_UDP_1"/>
    <property type="match status" value="1"/>
</dbReference>
<dbReference type="SUPFAM" id="SSF53167">
    <property type="entry name" value="Purine and uridine phosphorylases"/>
    <property type="match status" value="1"/>
</dbReference>
<dbReference type="PROSITE" id="PS01232">
    <property type="entry name" value="PNP_UDP_1"/>
    <property type="match status" value="1"/>
</dbReference>
<reference key="1">
    <citation type="journal article" date="2003" name="Proc. Natl. Acad. Sci. U.S.A.">
        <title>Reductive genome evolution in Buchnera aphidicola.</title>
        <authorList>
            <person name="van Ham R.C.H.J."/>
            <person name="Kamerbeek J."/>
            <person name="Palacios C."/>
            <person name="Rausell C."/>
            <person name="Abascal F."/>
            <person name="Bastolla U."/>
            <person name="Fernandez J.M."/>
            <person name="Jimenez L."/>
            <person name="Postigo M."/>
            <person name="Silva F.J."/>
            <person name="Tamames J."/>
            <person name="Viguera E."/>
            <person name="Latorre A."/>
            <person name="Valencia A."/>
            <person name="Moran F."/>
            <person name="Moya A."/>
        </authorList>
    </citation>
    <scope>NUCLEOTIDE SEQUENCE [LARGE SCALE GENOMIC DNA]</scope>
    <source>
        <strain>Bp</strain>
    </source>
</reference>
<evidence type="ECO:0000250" key="1">
    <source>
        <dbReference type="UniProtKB" id="P50389"/>
    </source>
</evidence>
<evidence type="ECO:0000255" key="2">
    <source>
        <dbReference type="HAMAP-Rule" id="MF_01627"/>
    </source>
</evidence>
<protein>
    <recommendedName>
        <fullName evidence="2">Purine nucleoside phosphorylase DeoD-type</fullName>
        <shortName evidence="2">PNP</shortName>
        <ecNumber evidence="2">2.4.2.1</ecNumber>
    </recommendedName>
</protein>
<proteinExistence type="inferred from homology"/>
<organism>
    <name type="scientific">Buchnera aphidicola subsp. Baizongia pistaciae (strain Bp)</name>
    <dbReference type="NCBI Taxonomy" id="224915"/>
    <lineage>
        <taxon>Bacteria</taxon>
        <taxon>Pseudomonadati</taxon>
        <taxon>Pseudomonadota</taxon>
        <taxon>Gammaproteobacteria</taxon>
        <taxon>Enterobacterales</taxon>
        <taxon>Erwiniaceae</taxon>
        <taxon>Buchnera</taxon>
    </lineage>
</organism>
<name>DEOD_BUCBP</name>
<feature type="chain" id="PRO_0000063124" description="Purine nucleoside phosphorylase DeoD-type">
    <location>
        <begin position="1"/>
        <end position="238"/>
    </location>
</feature>
<feature type="active site" description="Proton donor" evidence="2">
    <location>
        <position position="205"/>
    </location>
</feature>
<feature type="binding site" evidence="1">
    <location>
        <position position="5"/>
    </location>
    <ligand>
        <name>a purine D-ribonucleoside</name>
        <dbReference type="ChEBI" id="CHEBI:142355"/>
        <note>ligand shared between dimeric partners</note>
    </ligand>
</feature>
<feature type="binding site" description="in other chain" evidence="1">
    <location>
        <position position="21"/>
    </location>
    <ligand>
        <name>phosphate</name>
        <dbReference type="ChEBI" id="CHEBI:43474"/>
        <note>ligand shared between dimeric partners</note>
    </ligand>
</feature>
<feature type="binding site" description="in other chain" evidence="1">
    <location>
        <position position="25"/>
    </location>
    <ligand>
        <name>phosphate</name>
        <dbReference type="ChEBI" id="CHEBI:43474"/>
        <note>ligand shared between dimeric partners</note>
    </ligand>
</feature>
<feature type="binding site" evidence="1">
    <location>
        <position position="44"/>
    </location>
    <ligand>
        <name>phosphate</name>
        <dbReference type="ChEBI" id="CHEBI:43474"/>
        <note>ligand shared between dimeric partners</note>
    </ligand>
</feature>
<feature type="binding site" description="in other chain" evidence="1">
    <location>
        <begin position="88"/>
        <end position="91"/>
    </location>
    <ligand>
        <name>phosphate</name>
        <dbReference type="ChEBI" id="CHEBI:43474"/>
        <note>ligand shared between dimeric partners</note>
    </ligand>
</feature>
<feature type="binding site" description="in other chain" evidence="1">
    <location>
        <begin position="180"/>
        <end position="182"/>
    </location>
    <ligand>
        <name>a purine D-ribonucleoside</name>
        <dbReference type="ChEBI" id="CHEBI:142355"/>
        <note>ligand shared between dimeric partners</note>
    </ligand>
</feature>
<feature type="binding site" description="in other chain" evidence="1">
    <location>
        <begin position="204"/>
        <end position="205"/>
    </location>
    <ligand>
        <name>a purine D-ribonucleoside</name>
        <dbReference type="ChEBI" id="CHEBI:142355"/>
        <note>ligand shared between dimeric partners</note>
    </ligand>
</feature>
<feature type="site" description="Important for catalytic activity" evidence="2">
    <location>
        <position position="218"/>
    </location>
</feature>
<keyword id="KW-0328">Glycosyltransferase</keyword>
<keyword id="KW-1185">Reference proteome</keyword>
<keyword id="KW-0808">Transferase</keyword>
<comment type="function">
    <text evidence="2">Catalyzes the reversible phosphorolytic breakdown of the N-glycosidic bond in the beta-(deoxy)ribonucleoside molecules, with the formation of the corresponding free purine bases and pentose-1-phosphate.</text>
</comment>
<comment type="catalytic activity">
    <reaction evidence="2">
        <text>a purine D-ribonucleoside + phosphate = a purine nucleobase + alpha-D-ribose 1-phosphate</text>
        <dbReference type="Rhea" id="RHEA:19805"/>
        <dbReference type="ChEBI" id="CHEBI:26386"/>
        <dbReference type="ChEBI" id="CHEBI:43474"/>
        <dbReference type="ChEBI" id="CHEBI:57720"/>
        <dbReference type="ChEBI" id="CHEBI:142355"/>
        <dbReference type="EC" id="2.4.2.1"/>
    </reaction>
</comment>
<comment type="catalytic activity">
    <reaction evidence="2">
        <text>a purine 2'-deoxy-D-ribonucleoside + phosphate = a purine nucleobase + 2-deoxy-alpha-D-ribose 1-phosphate</text>
        <dbReference type="Rhea" id="RHEA:36431"/>
        <dbReference type="ChEBI" id="CHEBI:26386"/>
        <dbReference type="ChEBI" id="CHEBI:43474"/>
        <dbReference type="ChEBI" id="CHEBI:57259"/>
        <dbReference type="ChEBI" id="CHEBI:142361"/>
        <dbReference type="EC" id="2.4.2.1"/>
    </reaction>
</comment>
<comment type="subunit">
    <text evidence="2">Homohexamer; trimer of homodimers.</text>
</comment>
<comment type="similarity">
    <text evidence="2">Belongs to the PNP/UDP phosphorylase family.</text>
</comment>
<gene>
    <name evidence="2" type="primary">deoD</name>
    <name type="ordered locus">bbp_483</name>
</gene>
<sequence>MVTPHINAKKGDFSDCVLMPGDPLRARYIAKNYLKNAIEVTNIRSMLGYTGRYKGHRISVMSHGIGIPSSLIYVKELVSEYNVKKIIRIGTCGTVIEHININDIIICLGASTDSKVNRLRFHDNDFSSVADFYLILDLFNSANNAGIKINIGNFFTTDLFYVKNDKLLDTLQRYNILGIDMETAGIYSLASELGIQVASICTVSDHILKKDQMSYIDRESNLNNMIYISLEALILKKV</sequence>
<accession>Q89A58</accession>